<feature type="chain" id="PRO_0000274834" description="3-deoxy-manno-octulosonate cytidylyltransferase">
    <location>
        <begin position="1"/>
        <end position="246"/>
    </location>
</feature>
<name>KDSB_RICFE</name>
<comment type="function">
    <text evidence="1">Activates KDO (a required 8-carbon sugar) for incorporation into bacterial lipopolysaccharide in Gram-negative bacteria.</text>
</comment>
<comment type="catalytic activity">
    <reaction evidence="1">
        <text>3-deoxy-alpha-D-manno-oct-2-ulosonate + CTP = CMP-3-deoxy-beta-D-manno-octulosonate + diphosphate</text>
        <dbReference type="Rhea" id="RHEA:23448"/>
        <dbReference type="ChEBI" id="CHEBI:33019"/>
        <dbReference type="ChEBI" id="CHEBI:37563"/>
        <dbReference type="ChEBI" id="CHEBI:85986"/>
        <dbReference type="ChEBI" id="CHEBI:85987"/>
        <dbReference type="EC" id="2.7.7.38"/>
    </reaction>
</comment>
<comment type="pathway">
    <text evidence="1">Nucleotide-sugar biosynthesis; CMP-3-deoxy-D-manno-octulosonate biosynthesis; CMP-3-deoxy-D-manno-octulosonate from 3-deoxy-D-manno-octulosonate and CTP: step 1/1.</text>
</comment>
<comment type="pathway">
    <text evidence="1">Bacterial outer membrane biogenesis; lipopolysaccharide biosynthesis.</text>
</comment>
<comment type="subcellular location">
    <subcellularLocation>
        <location evidence="1">Cytoplasm</location>
    </subcellularLocation>
</comment>
<comment type="similarity">
    <text evidence="1">Belongs to the KdsB family.</text>
</comment>
<proteinExistence type="inferred from homology"/>
<evidence type="ECO:0000255" key="1">
    <source>
        <dbReference type="HAMAP-Rule" id="MF_00057"/>
    </source>
</evidence>
<gene>
    <name evidence="1" type="primary">kdsB</name>
    <name type="ordered locus">RF_0594</name>
</gene>
<reference key="1">
    <citation type="journal article" date="2005" name="PLoS Biol.">
        <title>The genome sequence of Rickettsia felis identifies the first putative conjugative plasmid in an obligate intracellular parasite.</title>
        <authorList>
            <person name="Ogata H."/>
            <person name="Renesto P."/>
            <person name="Audic S."/>
            <person name="Robert C."/>
            <person name="Blanc G."/>
            <person name="Fournier P.-E."/>
            <person name="Parinello H."/>
            <person name="Claverie J.-M."/>
            <person name="Raoult D."/>
        </authorList>
    </citation>
    <scope>NUCLEOTIDE SEQUENCE [LARGE SCALE GENOMIC DNA]</scope>
    <source>
        <strain>ATCC VR-1525 / URRWXCal2</strain>
    </source>
</reference>
<accession>Q4ULX8</accession>
<sequence length="246" mass="27575">MQHQDVAIIIPSRLSSTRLKQKPLQLIGSTTLIERVFKQVNQANLEHTYVATDSEEIANIIKKVGGKVIFTDSAIPTGTDRTYEAFKLIPNNQNINYIVNVQGDMPFIEPSSILKIIEYLKNSEYDIVTPVVKVDRESVEASSNVTVAVDSAGKALYFSRSLIPNGAEKFLYHVGMYGFRKNALEKFVSLKPTFLEKTERLEQLRVLENGMTIGTCLVENVPISVDTEDDLKKAVKFYENISKLGL</sequence>
<keyword id="KW-0963">Cytoplasm</keyword>
<keyword id="KW-0448">Lipopolysaccharide biosynthesis</keyword>
<keyword id="KW-0548">Nucleotidyltransferase</keyword>
<keyword id="KW-0808">Transferase</keyword>
<dbReference type="EC" id="2.7.7.38" evidence="1"/>
<dbReference type="EMBL" id="CP000053">
    <property type="protein sequence ID" value="AAY61445.1"/>
    <property type="molecule type" value="Genomic_DNA"/>
</dbReference>
<dbReference type="SMR" id="Q4ULX8"/>
<dbReference type="STRING" id="315456.RF_0594"/>
<dbReference type="KEGG" id="rfe:RF_0594"/>
<dbReference type="eggNOG" id="COG1212">
    <property type="taxonomic scope" value="Bacteria"/>
</dbReference>
<dbReference type="HOGENOM" id="CLU_065038_0_1_5"/>
<dbReference type="OrthoDB" id="9815559at2"/>
<dbReference type="UniPathway" id="UPA00030"/>
<dbReference type="UniPathway" id="UPA00358">
    <property type="reaction ID" value="UER00476"/>
</dbReference>
<dbReference type="Proteomes" id="UP000008548">
    <property type="component" value="Chromosome"/>
</dbReference>
<dbReference type="GO" id="GO:0005829">
    <property type="term" value="C:cytosol"/>
    <property type="evidence" value="ECO:0007669"/>
    <property type="project" value="TreeGrafter"/>
</dbReference>
<dbReference type="GO" id="GO:0008690">
    <property type="term" value="F:3-deoxy-manno-octulosonate cytidylyltransferase activity"/>
    <property type="evidence" value="ECO:0007669"/>
    <property type="project" value="UniProtKB-UniRule"/>
</dbReference>
<dbReference type="GO" id="GO:0033468">
    <property type="term" value="P:CMP-keto-3-deoxy-D-manno-octulosonic acid biosynthetic process"/>
    <property type="evidence" value="ECO:0007669"/>
    <property type="project" value="UniProtKB-UniRule"/>
</dbReference>
<dbReference type="GO" id="GO:0009103">
    <property type="term" value="P:lipopolysaccharide biosynthetic process"/>
    <property type="evidence" value="ECO:0007669"/>
    <property type="project" value="UniProtKB-UniRule"/>
</dbReference>
<dbReference type="CDD" id="cd02517">
    <property type="entry name" value="CMP-KDO-Synthetase"/>
    <property type="match status" value="1"/>
</dbReference>
<dbReference type="Gene3D" id="3.90.550.10">
    <property type="entry name" value="Spore Coat Polysaccharide Biosynthesis Protein SpsA, Chain A"/>
    <property type="match status" value="1"/>
</dbReference>
<dbReference type="HAMAP" id="MF_00057">
    <property type="entry name" value="KdsB"/>
    <property type="match status" value="1"/>
</dbReference>
<dbReference type="InterPro" id="IPR003329">
    <property type="entry name" value="Cytidylyl_trans"/>
</dbReference>
<dbReference type="InterPro" id="IPR004528">
    <property type="entry name" value="KdsB"/>
</dbReference>
<dbReference type="InterPro" id="IPR029044">
    <property type="entry name" value="Nucleotide-diphossugar_trans"/>
</dbReference>
<dbReference type="NCBIfam" id="TIGR00466">
    <property type="entry name" value="kdsB"/>
    <property type="match status" value="1"/>
</dbReference>
<dbReference type="NCBIfam" id="NF003948">
    <property type="entry name" value="PRK05450.1-1"/>
    <property type="match status" value="1"/>
</dbReference>
<dbReference type="NCBIfam" id="NF003952">
    <property type="entry name" value="PRK05450.1-5"/>
    <property type="match status" value="1"/>
</dbReference>
<dbReference type="PANTHER" id="PTHR42866">
    <property type="entry name" value="3-DEOXY-MANNO-OCTULOSONATE CYTIDYLYLTRANSFERASE"/>
    <property type="match status" value="1"/>
</dbReference>
<dbReference type="PANTHER" id="PTHR42866:SF2">
    <property type="entry name" value="3-DEOXY-MANNO-OCTULOSONATE CYTIDYLYLTRANSFERASE, MITOCHONDRIAL"/>
    <property type="match status" value="1"/>
</dbReference>
<dbReference type="Pfam" id="PF02348">
    <property type="entry name" value="CTP_transf_3"/>
    <property type="match status" value="1"/>
</dbReference>
<dbReference type="SUPFAM" id="SSF53448">
    <property type="entry name" value="Nucleotide-diphospho-sugar transferases"/>
    <property type="match status" value="1"/>
</dbReference>
<protein>
    <recommendedName>
        <fullName evidence="1">3-deoxy-manno-octulosonate cytidylyltransferase</fullName>
        <ecNumber evidence="1">2.7.7.38</ecNumber>
    </recommendedName>
    <alternativeName>
        <fullName evidence="1">CMP-2-keto-3-deoxyoctulosonic acid synthase</fullName>
        <shortName evidence="1">CKS</shortName>
        <shortName evidence="1">CMP-KDO synthase</shortName>
    </alternativeName>
</protein>
<organism>
    <name type="scientific">Rickettsia felis (strain ATCC VR-1525 / URRWXCal2)</name>
    <name type="common">Rickettsia azadi</name>
    <dbReference type="NCBI Taxonomy" id="315456"/>
    <lineage>
        <taxon>Bacteria</taxon>
        <taxon>Pseudomonadati</taxon>
        <taxon>Pseudomonadota</taxon>
        <taxon>Alphaproteobacteria</taxon>
        <taxon>Rickettsiales</taxon>
        <taxon>Rickettsiaceae</taxon>
        <taxon>Rickettsieae</taxon>
        <taxon>Rickettsia</taxon>
        <taxon>spotted fever group</taxon>
    </lineage>
</organism>